<organism>
    <name type="scientific">Pongo abelii</name>
    <name type="common">Sumatran orangutan</name>
    <name type="synonym">Pongo pygmaeus abelii</name>
    <dbReference type="NCBI Taxonomy" id="9601"/>
    <lineage>
        <taxon>Eukaryota</taxon>
        <taxon>Metazoa</taxon>
        <taxon>Chordata</taxon>
        <taxon>Craniata</taxon>
        <taxon>Vertebrata</taxon>
        <taxon>Euteleostomi</taxon>
        <taxon>Mammalia</taxon>
        <taxon>Eutheria</taxon>
        <taxon>Euarchontoglires</taxon>
        <taxon>Primates</taxon>
        <taxon>Haplorrhini</taxon>
        <taxon>Catarrhini</taxon>
        <taxon>Hominidae</taxon>
        <taxon>Pongo</taxon>
    </lineage>
</organism>
<comment type="function">
    <text evidence="1">Involved in the biosynthesis of tetrahydrobiopterin, an essential cofactor of aromatic amino acid hydroxylases. Catalyzes the transformation of 7,8-dihydroneopterin triphosphate into 6-pyruvoyl tetrahydropterin (By similarity).</text>
</comment>
<comment type="catalytic activity">
    <reaction>
        <text>7,8-dihydroneopterin 3'-triphosphate = 6-pyruvoyl-5,6,7,8-tetrahydropterin + triphosphate + H(+)</text>
        <dbReference type="Rhea" id="RHEA:22048"/>
        <dbReference type="ChEBI" id="CHEBI:15378"/>
        <dbReference type="ChEBI" id="CHEBI:18036"/>
        <dbReference type="ChEBI" id="CHEBI:58462"/>
        <dbReference type="ChEBI" id="CHEBI:136564"/>
        <dbReference type="EC" id="4.2.3.12"/>
    </reaction>
</comment>
<comment type="cofactor">
    <cofactor evidence="1">
        <name>Zn(2+)</name>
        <dbReference type="ChEBI" id="CHEBI:29105"/>
    </cofactor>
    <text evidence="1">Binds 1 zinc ion per subunit.</text>
</comment>
<comment type="pathway">
    <text>Cofactor biosynthesis; tetrahydrobiopterin biosynthesis; tetrahydrobiopterin from 7,8-dihydroneopterin triphosphate: step 1/3.</text>
</comment>
<comment type="subunit">
    <text evidence="1">Homohexamer formed of two homotrimers in a head to head fashion.</text>
</comment>
<comment type="PTM">
    <text evidence="1">Phosphorylation of Ser-19 is required for maximal enzyme activity.</text>
</comment>
<comment type="miscellaneous">
    <text>The active site is at the interface between 2 subunits. The proton acceptor Cys is on one subunit, and the charge relay system is on the other subunit.</text>
</comment>
<comment type="similarity">
    <text evidence="5">Belongs to the PTPS family.</text>
</comment>
<name>PTPS_PONAB</name>
<dbReference type="EC" id="4.2.3.12"/>
<dbReference type="EMBL" id="CR857367">
    <property type="protein sequence ID" value="CAH89662.1"/>
    <property type="molecule type" value="mRNA"/>
</dbReference>
<dbReference type="RefSeq" id="NP_001124750.1">
    <property type="nucleotide sequence ID" value="NM_001131278.2"/>
</dbReference>
<dbReference type="SMR" id="Q5REZ5"/>
<dbReference type="FunCoup" id="Q5REZ5">
    <property type="interactions" value="1736"/>
</dbReference>
<dbReference type="STRING" id="9601.ENSPPYP00000004445"/>
<dbReference type="Ensembl" id="ENSPPYT00000058588.1">
    <property type="protein sequence ID" value="ENSPPYP00000029489.1"/>
    <property type="gene ID" value="ENSPPYG00000003880.3"/>
</dbReference>
<dbReference type="GeneID" id="100171600"/>
<dbReference type="KEGG" id="pon:100171600"/>
<dbReference type="CTD" id="5805"/>
<dbReference type="eggNOG" id="KOG4105">
    <property type="taxonomic scope" value="Eukaryota"/>
</dbReference>
<dbReference type="GeneTree" id="ENSGT00390000002752"/>
<dbReference type="InParanoid" id="Q5REZ5"/>
<dbReference type="OMA" id="YETERNF"/>
<dbReference type="OrthoDB" id="14045at2759"/>
<dbReference type="UniPathway" id="UPA00849">
    <property type="reaction ID" value="UER00819"/>
</dbReference>
<dbReference type="Proteomes" id="UP000001595">
    <property type="component" value="Chromosome 11"/>
</dbReference>
<dbReference type="GO" id="GO:0005829">
    <property type="term" value="C:cytosol"/>
    <property type="evidence" value="ECO:0007669"/>
    <property type="project" value="Ensembl"/>
</dbReference>
<dbReference type="GO" id="GO:0005739">
    <property type="term" value="C:mitochondrion"/>
    <property type="evidence" value="ECO:0007669"/>
    <property type="project" value="Ensembl"/>
</dbReference>
<dbReference type="GO" id="GO:0003874">
    <property type="term" value="F:6-pyruvoyltetrahydropterin synthase activity"/>
    <property type="evidence" value="ECO:0007669"/>
    <property type="project" value="UniProtKB-EC"/>
</dbReference>
<dbReference type="GO" id="GO:0042802">
    <property type="term" value="F:identical protein binding"/>
    <property type="evidence" value="ECO:0007669"/>
    <property type="project" value="Ensembl"/>
</dbReference>
<dbReference type="GO" id="GO:0046872">
    <property type="term" value="F:metal ion binding"/>
    <property type="evidence" value="ECO:0007669"/>
    <property type="project" value="UniProtKB-KW"/>
</dbReference>
<dbReference type="GO" id="GO:0006729">
    <property type="term" value="P:tetrahydrobiopterin biosynthetic process"/>
    <property type="evidence" value="ECO:0007669"/>
    <property type="project" value="UniProtKB-UniPathway"/>
</dbReference>
<dbReference type="CDD" id="cd00470">
    <property type="entry name" value="PTPS"/>
    <property type="match status" value="1"/>
</dbReference>
<dbReference type="FunFam" id="3.30.479.10:FF:000003">
    <property type="entry name" value="6-pyruvoyl tetrahydrobiopterin synthase"/>
    <property type="match status" value="1"/>
</dbReference>
<dbReference type="Gene3D" id="3.30.479.10">
    <property type="entry name" value="6-pyruvoyl tetrahydropterin synthase/QueD"/>
    <property type="match status" value="1"/>
</dbReference>
<dbReference type="InterPro" id="IPR007115">
    <property type="entry name" value="6-PTP_synth/QueD"/>
</dbReference>
<dbReference type="InterPro" id="IPR038418">
    <property type="entry name" value="6-PTP_synth/QueD_sf"/>
</dbReference>
<dbReference type="InterPro" id="IPR022469">
    <property type="entry name" value="PTPS_His_AS"/>
</dbReference>
<dbReference type="NCBIfam" id="TIGR00039">
    <property type="entry name" value="6PTHBS"/>
    <property type="match status" value="1"/>
</dbReference>
<dbReference type="PANTHER" id="PTHR12589:SF7">
    <property type="entry name" value="6-PYRUVOYL TETRAHYDROBIOPTERIN SYNTHASE"/>
    <property type="match status" value="1"/>
</dbReference>
<dbReference type="PANTHER" id="PTHR12589">
    <property type="entry name" value="PYRUVOYL TETRAHYDROBIOPTERIN SYNTHASE"/>
    <property type="match status" value="1"/>
</dbReference>
<dbReference type="Pfam" id="PF01242">
    <property type="entry name" value="PTPS"/>
    <property type="match status" value="1"/>
</dbReference>
<dbReference type="PIRSF" id="PIRSF006113">
    <property type="entry name" value="PTP_synth"/>
    <property type="match status" value="1"/>
</dbReference>
<dbReference type="SUPFAM" id="SSF55620">
    <property type="entry name" value="Tetrahydrobiopterin biosynthesis enzymes-like"/>
    <property type="match status" value="1"/>
</dbReference>
<dbReference type="PROSITE" id="PS00988">
    <property type="entry name" value="PTPS_2"/>
    <property type="match status" value="1"/>
</dbReference>
<feature type="chain" id="PRO_0000260520" description="6-pyruvoyl tetrahydrobiopterin synthase">
    <location>
        <begin position="1"/>
        <end position="145"/>
    </location>
</feature>
<feature type="active site" description="Proton acceptor" evidence="1">
    <location>
        <position position="43"/>
    </location>
</feature>
<feature type="active site" description="Charge relay system" evidence="4">
    <location>
        <position position="90"/>
    </location>
</feature>
<feature type="active site" description="Charge relay system" evidence="4">
    <location>
        <position position="134"/>
    </location>
</feature>
<feature type="binding site" evidence="1">
    <location>
        <position position="24"/>
    </location>
    <ligand>
        <name>Zn(2+)</name>
        <dbReference type="ChEBI" id="CHEBI:29105"/>
    </ligand>
</feature>
<feature type="binding site" evidence="1">
    <location>
        <position position="49"/>
    </location>
    <ligand>
        <name>Zn(2+)</name>
        <dbReference type="ChEBI" id="CHEBI:29105"/>
    </ligand>
</feature>
<feature type="binding site" evidence="1">
    <location>
        <position position="51"/>
    </location>
    <ligand>
        <name>Zn(2+)</name>
        <dbReference type="ChEBI" id="CHEBI:29105"/>
    </ligand>
</feature>
<feature type="modified residue" description="Phosphoserine" evidence="2">
    <location>
        <position position="19"/>
    </location>
</feature>
<feature type="modified residue" description="Phosphoserine" evidence="3">
    <location>
        <position position="28"/>
    </location>
</feature>
<feature type="modified residue" description="Phosphotyrosine" evidence="2">
    <location>
        <position position="128"/>
    </location>
</feature>
<evidence type="ECO:0000250" key="1"/>
<evidence type="ECO:0000250" key="2">
    <source>
        <dbReference type="UniProtKB" id="Q03393"/>
    </source>
</evidence>
<evidence type="ECO:0000250" key="3">
    <source>
        <dbReference type="UniProtKB" id="Q9R1Z7"/>
    </source>
</evidence>
<evidence type="ECO:0000255" key="4">
    <source>
        <dbReference type="PROSITE-ProRule" id="PRU10124"/>
    </source>
</evidence>
<evidence type="ECO:0000305" key="5"/>
<gene>
    <name type="primary">PTS</name>
</gene>
<accession>Q5REZ5</accession>
<reference key="1">
    <citation type="submission" date="2004-11" db="EMBL/GenBank/DDBJ databases">
        <authorList>
            <consortium name="The German cDNA consortium"/>
        </authorList>
    </citation>
    <scope>NUCLEOTIDE SEQUENCE [LARGE SCALE MRNA]</scope>
    <source>
        <tissue>Kidney</tissue>
    </source>
</reference>
<proteinExistence type="evidence at transcript level"/>
<protein>
    <recommendedName>
        <fullName>6-pyruvoyl tetrahydrobiopterin synthase</fullName>
        <shortName>PTP synthase</shortName>
        <shortName>PTPS</shortName>
        <ecNumber>4.2.3.12</ecNumber>
    </recommendedName>
</protein>
<sequence length="145" mass="16315">MSTAGGGRRCQAQVSRRISFSASHRLYSKFLSDEENLKLFGKCSNPNGHGHNYKVVVTVHGEIDPATGMVMNLADLKKYMEEAIMQPLDHKNLDMDVPYFADVVSTTENVAVYIWDNLQKVLPVGVLYKVKLYETDNNIVVYKGE</sequence>
<keyword id="KW-0456">Lyase</keyword>
<keyword id="KW-0479">Metal-binding</keyword>
<keyword id="KW-0597">Phosphoprotein</keyword>
<keyword id="KW-1185">Reference proteome</keyword>
<keyword id="KW-0783">Tetrahydrobiopterin biosynthesis</keyword>
<keyword id="KW-0862">Zinc</keyword>